<proteinExistence type="inferred from homology"/>
<gene>
    <name evidence="1" type="primary">adk2</name>
    <name type="ordered locus">sll1059</name>
</gene>
<accession>P72641</accession>
<comment type="function">
    <text evidence="1">Catalyzes the reversible transfer of the terminal phosphate group between ATP and AMP. Plays an important role in cellular energy homeostasis and in adenine nucleotide metabolism.</text>
</comment>
<comment type="catalytic activity">
    <reaction evidence="1">
        <text>AMP + ATP = 2 ADP</text>
        <dbReference type="Rhea" id="RHEA:12973"/>
        <dbReference type="ChEBI" id="CHEBI:30616"/>
        <dbReference type="ChEBI" id="CHEBI:456215"/>
        <dbReference type="ChEBI" id="CHEBI:456216"/>
        <dbReference type="EC" id="2.7.4.3"/>
    </reaction>
</comment>
<comment type="pathway">
    <text evidence="1">Purine metabolism; AMP biosynthesis via salvage pathway; AMP from ADP: step 1/1.</text>
</comment>
<comment type="subunit">
    <text evidence="1">Monomer.</text>
</comment>
<comment type="subcellular location">
    <subcellularLocation>
        <location evidence="1">Cytoplasm</location>
    </subcellularLocation>
</comment>
<comment type="domain">
    <text evidence="1">Consists of three domains, a large central CORE domain and two small peripheral domains, NMPbind and LID, which undergo movements during catalysis. The LID domain closes over the site of phosphoryl transfer upon ATP binding. Assembling and dissambling the active center during each catalytic cycle provides an effective means to prevent ATP hydrolysis.</text>
</comment>
<comment type="similarity">
    <text evidence="1">Belongs to the adenylate kinase family.</text>
</comment>
<keyword id="KW-0067">ATP-binding</keyword>
<keyword id="KW-0963">Cytoplasm</keyword>
<keyword id="KW-0418">Kinase</keyword>
<keyword id="KW-0545">Nucleotide biosynthesis</keyword>
<keyword id="KW-0547">Nucleotide-binding</keyword>
<keyword id="KW-1185">Reference proteome</keyword>
<keyword id="KW-0808">Transferase</keyword>
<name>KAD2_SYNY3</name>
<feature type="chain" id="PRO_0000158872" description="Adenylate kinase 2">
    <location>
        <begin position="1"/>
        <end position="181"/>
    </location>
</feature>
<feature type="region of interest" description="NMP" evidence="1">
    <location>
        <begin position="30"/>
        <end position="59"/>
    </location>
</feature>
<feature type="region of interest" description="LID" evidence="1">
    <location>
        <begin position="126"/>
        <end position="132"/>
    </location>
</feature>
<feature type="binding site" evidence="1">
    <location>
        <begin position="10"/>
        <end position="15"/>
    </location>
    <ligand>
        <name>ATP</name>
        <dbReference type="ChEBI" id="CHEBI:30616"/>
    </ligand>
</feature>
<feature type="binding site" evidence="1">
    <location>
        <position position="36"/>
    </location>
    <ligand>
        <name>AMP</name>
        <dbReference type="ChEBI" id="CHEBI:456215"/>
    </ligand>
</feature>
<feature type="binding site" evidence="1">
    <location>
        <begin position="57"/>
        <end position="59"/>
    </location>
    <ligand>
        <name>AMP</name>
        <dbReference type="ChEBI" id="CHEBI:456215"/>
    </ligand>
</feature>
<feature type="binding site" evidence="1">
    <location>
        <begin position="85"/>
        <end position="88"/>
    </location>
    <ligand>
        <name>AMP</name>
        <dbReference type="ChEBI" id="CHEBI:456215"/>
    </ligand>
</feature>
<feature type="binding site" evidence="1">
    <location>
        <position position="92"/>
    </location>
    <ligand>
        <name>AMP</name>
        <dbReference type="ChEBI" id="CHEBI:456215"/>
    </ligand>
</feature>
<feature type="binding site" evidence="1">
    <location>
        <position position="127"/>
    </location>
    <ligand>
        <name>ATP</name>
        <dbReference type="ChEBI" id="CHEBI:30616"/>
    </ligand>
</feature>
<feature type="binding site" evidence="1">
    <location>
        <position position="140"/>
    </location>
    <ligand>
        <name>AMP</name>
        <dbReference type="ChEBI" id="CHEBI:456215"/>
    </ligand>
</feature>
<feature type="binding site" evidence="1">
    <location>
        <position position="168"/>
    </location>
    <ligand>
        <name>ATP</name>
        <dbReference type="ChEBI" id="CHEBI:30616"/>
    </ligand>
</feature>
<protein>
    <recommendedName>
        <fullName evidence="1">Adenylate kinase 2</fullName>
        <shortName evidence="1">AK 2</shortName>
        <ecNumber evidence="1">2.7.4.3</ecNumber>
    </recommendedName>
    <alternativeName>
        <fullName evidence="1">ATP-AMP transphosphorylase 2</fullName>
    </alternativeName>
    <alternativeName>
        <fullName evidence="1">ATP:AMP phosphotransferase 2</fullName>
    </alternativeName>
    <alternativeName>
        <fullName evidence="1">Adenylate monophosphate kinase 2</fullName>
    </alternativeName>
</protein>
<reference key="1">
    <citation type="journal article" date="1996" name="DNA Res.">
        <title>Sequence analysis of the genome of the unicellular cyanobacterium Synechocystis sp. strain PCC6803. II. Sequence determination of the entire genome and assignment of potential protein-coding regions.</title>
        <authorList>
            <person name="Kaneko T."/>
            <person name="Sato S."/>
            <person name="Kotani H."/>
            <person name="Tanaka A."/>
            <person name="Asamizu E."/>
            <person name="Nakamura Y."/>
            <person name="Miyajima N."/>
            <person name="Hirosawa M."/>
            <person name="Sugiura M."/>
            <person name="Sasamoto S."/>
            <person name="Kimura T."/>
            <person name="Hosouchi T."/>
            <person name="Matsuno A."/>
            <person name="Muraki A."/>
            <person name="Nakazaki N."/>
            <person name="Naruo K."/>
            <person name="Okumura S."/>
            <person name="Shimpo S."/>
            <person name="Takeuchi C."/>
            <person name="Wada T."/>
            <person name="Watanabe A."/>
            <person name="Yamada M."/>
            <person name="Yasuda M."/>
            <person name="Tabata S."/>
        </authorList>
    </citation>
    <scope>NUCLEOTIDE SEQUENCE [LARGE SCALE GENOMIC DNA]</scope>
    <source>
        <strain>ATCC 27184 / PCC 6803 / Kazusa</strain>
    </source>
</reference>
<dbReference type="EC" id="2.7.4.3" evidence="1"/>
<dbReference type="EMBL" id="BA000022">
    <property type="protein sequence ID" value="BAA16643.1"/>
    <property type="molecule type" value="Genomic_DNA"/>
</dbReference>
<dbReference type="PIR" id="S74491">
    <property type="entry name" value="S74491"/>
</dbReference>
<dbReference type="SMR" id="P72641"/>
<dbReference type="STRING" id="1148.gene:10497498"/>
<dbReference type="PaxDb" id="1148-1651715"/>
<dbReference type="EnsemblBacteria" id="BAA16643">
    <property type="protein sequence ID" value="BAA16643"/>
    <property type="gene ID" value="BAA16643"/>
</dbReference>
<dbReference type="KEGG" id="syn:sll1059"/>
<dbReference type="eggNOG" id="COG0563">
    <property type="taxonomic scope" value="Bacteria"/>
</dbReference>
<dbReference type="InParanoid" id="P72641"/>
<dbReference type="PhylomeDB" id="P72641"/>
<dbReference type="UniPathway" id="UPA00588">
    <property type="reaction ID" value="UER00649"/>
</dbReference>
<dbReference type="Proteomes" id="UP000001425">
    <property type="component" value="Chromosome"/>
</dbReference>
<dbReference type="GO" id="GO:0005737">
    <property type="term" value="C:cytoplasm"/>
    <property type="evidence" value="ECO:0000318"/>
    <property type="project" value="GO_Central"/>
</dbReference>
<dbReference type="GO" id="GO:0005829">
    <property type="term" value="C:cytosol"/>
    <property type="evidence" value="ECO:0000318"/>
    <property type="project" value="GO_Central"/>
</dbReference>
<dbReference type="GO" id="GO:0004017">
    <property type="term" value="F:adenylate kinase activity"/>
    <property type="evidence" value="ECO:0000318"/>
    <property type="project" value="GO_Central"/>
</dbReference>
<dbReference type="GO" id="GO:0005524">
    <property type="term" value="F:ATP binding"/>
    <property type="evidence" value="ECO:0007669"/>
    <property type="project" value="UniProtKB-UniRule"/>
</dbReference>
<dbReference type="GO" id="GO:0004550">
    <property type="term" value="F:nucleoside diphosphate kinase activity"/>
    <property type="evidence" value="ECO:0000318"/>
    <property type="project" value="GO_Central"/>
</dbReference>
<dbReference type="GO" id="GO:0044209">
    <property type="term" value="P:AMP salvage"/>
    <property type="evidence" value="ECO:0007669"/>
    <property type="project" value="UniProtKB-UniRule"/>
</dbReference>
<dbReference type="GO" id="GO:0009132">
    <property type="term" value="P:nucleoside diphosphate metabolic process"/>
    <property type="evidence" value="ECO:0000318"/>
    <property type="project" value="GO_Central"/>
</dbReference>
<dbReference type="GO" id="GO:0009123">
    <property type="term" value="P:nucleoside monophosphate metabolic process"/>
    <property type="evidence" value="ECO:0000318"/>
    <property type="project" value="GO_Central"/>
</dbReference>
<dbReference type="CDD" id="cd01428">
    <property type="entry name" value="ADK"/>
    <property type="match status" value="1"/>
</dbReference>
<dbReference type="Gene3D" id="3.40.50.300">
    <property type="entry name" value="P-loop containing nucleotide triphosphate hydrolases"/>
    <property type="match status" value="1"/>
</dbReference>
<dbReference type="HAMAP" id="MF_00235">
    <property type="entry name" value="Adenylate_kinase_Adk"/>
    <property type="match status" value="1"/>
</dbReference>
<dbReference type="InterPro" id="IPR000850">
    <property type="entry name" value="Adenylat/UMP-CMP_kin"/>
</dbReference>
<dbReference type="InterPro" id="IPR027417">
    <property type="entry name" value="P-loop_NTPase"/>
</dbReference>
<dbReference type="PANTHER" id="PTHR23359">
    <property type="entry name" value="NUCLEOTIDE KINASE"/>
    <property type="match status" value="1"/>
</dbReference>
<dbReference type="Pfam" id="PF00406">
    <property type="entry name" value="ADK"/>
    <property type="match status" value="1"/>
</dbReference>
<dbReference type="PRINTS" id="PR00094">
    <property type="entry name" value="ADENYLTKNASE"/>
</dbReference>
<dbReference type="SUPFAM" id="SSF52540">
    <property type="entry name" value="P-loop containing nucleoside triphosphate hydrolases"/>
    <property type="match status" value="1"/>
</dbReference>
<organism>
    <name type="scientific">Synechocystis sp. (strain ATCC 27184 / PCC 6803 / Kazusa)</name>
    <dbReference type="NCBI Taxonomy" id="1111708"/>
    <lineage>
        <taxon>Bacteria</taxon>
        <taxon>Bacillati</taxon>
        <taxon>Cyanobacteriota</taxon>
        <taxon>Cyanophyceae</taxon>
        <taxon>Synechococcales</taxon>
        <taxon>Merismopediaceae</taxon>
        <taxon>Synechocystis</taxon>
    </lineage>
</organism>
<evidence type="ECO:0000255" key="1">
    <source>
        <dbReference type="HAMAP-Rule" id="MF_00235"/>
    </source>
</evidence>
<sequence>MRLVMLGGPGSGKSTQSHNLSQELKLPVISMGGILREAIANATPLGIKAKPYVERGDLLPDPMMIEFIQQRLVQEDGGQGWILEGYPRTAFQAEELDFLLEDLGQPLDWALYLKIDEATMVERSLNRSLFDDHPEAITTRIGKFHEYTVPLLEYYAAKQNLLTVNAYPEVDQVTKLILARL</sequence>